<evidence type="ECO:0000255" key="1">
    <source>
        <dbReference type="HAMAP-Rule" id="MF_01631"/>
    </source>
</evidence>
<keyword id="KW-0012">Acyltransferase</keyword>
<keyword id="KW-0133">Cell shape</keyword>
<keyword id="KW-0961">Cell wall biogenesis/degradation</keyword>
<keyword id="KW-0963">Cytoplasm</keyword>
<keyword id="KW-0460">Magnesium</keyword>
<keyword id="KW-0479">Metal-binding</keyword>
<keyword id="KW-0511">Multifunctional enzyme</keyword>
<keyword id="KW-0548">Nucleotidyltransferase</keyword>
<keyword id="KW-0573">Peptidoglycan synthesis</keyword>
<keyword id="KW-1185">Reference proteome</keyword>
<keyword id="KW-0677">Repeat</keyword>
<keyword id="KW-0808">Transferase</keyword>
<feature type="chain" id="PRO_0000233756" description="Bifunctional protein GlmU">
    <location>
        <begin position="1"/>
        <end position="456"/>
    </location>
</feature>
<feature type="region of interest" description="Pyrophosphorylase" evidence="1">
    <location>
        <begin position="1"/>
        <end position="229"/>
    </location>
</feature>
<feature type="region of interest" description="Linker" evidence="1">
    <location>
        <begin position="230"/>
        <end position="250"/>
    </location>
</feature>
<feature type="region of interest" description="N-acetyltransferase" evidence="1">
    <location>
        <begin position="251"/>
        <end position="456"/>
    </location>
</feature>
<feature type="active site" description="Proton acceptor" evidence="1">
    <location>
        <position position="362"/>
    </location>
</feature>
<feature type="binding site" evidence="1">
    <location>
        <begin position="8"/>
        <end position="11"/>
    </location>
    <ligand>
        <name>UDP-N-acetyl-alpha-D-glucosamine</name>
        <dbReference type="ChEBI" id="CHEBI:57705"/>
    </ligand>
</feature>
<feature type="binding site" evidence="1">
    <location>
        <position position="22"/>
    </location>
    <ligand>
        <name>UDP-N-acetyl-alpha-D-glucosamine</name>
        <dbReference type="ChEBI" id="CHEBI:57705"/>
    </ligand>
</feature>
<feature type="binding site" evidence="1">
    <location>
        <position position="73"/>
    </location>
    <ligand>
        <name>UDP-N-acetyl-alpha-D-glucosamine</name>
        <dbReference type="ChEBI" id="CHEBI:57705"/>
    </ligand>
</feature>
<feature type="binding site" evidence="1">
    <location>
        <begin position="78"/>
        <end position="79"/>
    </location>
    <ligand>
        <name>UDP-N-acetyl-alpha-D-glucosamine</name>
        <dbReference type="ChEBI" id="CHEBI:57705"/>
    </ligand>
</feature>
<feature type="binding site" evidence="1">
    <location>
        <position position="103"/>
    </location>
    <ligand>
        <name>Mg(2+)</name>
        <dbReference type="ChEBI" id="CHEBI:18420"/>
    </ligand>
</feature>
<feature type="binding site" evidence="1">
    <location>
        <position position="140"/>
    </location>
    <ligand>
        <name>UDP-N-acetyl-alpha-D-glucosamine</name>
        <dbReference type="ChEBI" id="CHEBI:57705"/>
    </ligand>
</feature>
<feature type="binding site" evidence="1">
    <location>
        <position position="155"/>
    </location>
    <ligand>
        <name>UDP-N-acetyl-alpha-D-glucosamine</name>
        <dbReference type="ChEBI" id="CHEBI:57705"/>
    </ligand>
</feature>
<feature type="binding site" evidence="1">
    <location>
        <position position="170"/>
    </location>
    <ligand>
        <name>UDP-N-acetyl-alpha-D-glucosamine</name>
        <dbReference type="ChEBI" id="CHEBI:57705"/>
    </ligand>
</feature>
<feature type="binding site" evidence="1">
    <location>
        <position position="227"/>
    </location>
    <ligand>
        <name>Mg(2+)</name>
        <dbReference type="ChEBI" id="CHEBI:18420"/>
    </ligand>
</feature>
<feature type="binding site" evidence="1">
    <location>
        <position position="227"/>
    </location>
    <ligand>
        <name>UDP-N-acetyl-alpha-D-glucosamine</name>
        <dbReference type="ChEBI" id="CHEBI:57705"/>
    </ligand>
</feature>
<feature type="binding site" evidence="1">
    <location>
        <position position="332"/>
    </location>
    <ligand>
        <name>UDP-N-acetyl-alpha-D-glucosamine</name>
        <dbReference type="ChEBI" id="CHEBI:57705"/>
    </ligand>
</feature>
<feature type="binding site" evidence="1">
    <location>
        <position position="350"/>
    </location>
    <ligand>
        <name>UDP-N-acetyl-alpha-D-glucosamine</name>
        <dbReference type="ChEBI" id="CHEBI:57705"/>
    </ligand>
</feature>
<feature type="binding site" evidence="1">
    <location>
        <position position="365"/>
    </location>
    <ligand>
        <name>UDP-N-acetyl-alpha-D-glucosamine</name>
        <dbReference type="ChEBI" id="CHEBI:57705"/>
    </ligand>
</feature>
<feature type="binding site" evidence="1">
    <location>
        <position position="376"/>
    </location>
    <ligand>
        <name>UDP-N-acetyl-alpha-D-glucosamine</name>
        <dbReference type="ChEBI" id="CHEBI:57705"/>
    </ligand>
</feature>
<feature type="binding site" evidence="1">
    <location>
        <begin position="385"/>
        <end position="386"/>
    </location>
    <ligand>
        <name>acetyl-CoA</name>
        <dbReference type="ChEBI" id="CHEBI:57288"/>
    </ligand>
</feature>
<feature type="binding site" evidence="1">
    <location>
        <position position="422"/>
    </location>
    <ligand>
        <name>acetyl-CoA</name>
        <dbReference type="ChEBI" id="CHEBI:57288"/>
    </ligand>
</feature>
<feature type="binding site" evidence="1">
    <location>
        <position position="439"/>
    </location>
    <ligand>
        <name>acetyl-CoA</name>
        <dbReference type="ChEBI" id="CHEBI:57288"/>
    </ligand>
</feature>
<proteinExistence type="inferred from homology"/>
<reference key="1">
    <citation type="journal article" date="2001" name="J. Bacteriol.">
        <title>Genome sequence and comparative analysis of the solvent-producing bacterium Clostridium acetobutylicum.</title>
        <authorList>
            <person name="Noelling J."/>
            <person name="Breton G."/>
            <person name="Omelchenko M.V."/>
            <person name="Makarova K.S."/>
            <person name="Zeng Q."/>
            <person name="Gibson R."/>
            <person name="Lee H.M."/>
            <person name="Dubois J."/>
            <person name="Qiu D."/>
            <person name="Hitti J."/>
            <person name="Wolf Y.I."/>
            <person name="Tatusov R.L."/>
            <person name="Sabathe F."/>
            <person name="Doucette-Stamm L.A."/>
            <person name="Soucaille P."/>
            <person name="Daly M.J."/>
            <person name="Bennett G.N."/>
            <person name="Koonin E.V."/>
            <person name="Smith D.R."/>
        </authorList>
    </citation>
    <scope>NUCLEOTIDE SEQUENCE [LARGE SCALE GENOMIC DNA]</scope>
    <source>
        <strain>ATCC 824 / DSM 792 / JCM 1419 / IAM 19013 / LMG 5710 / NBRC 13948 / NRRL B-527 / VKM B-1787 / 2291 / W</strain>
    </source>
</reference>
<protein>
    <recommendedName>
        <fullName evidence="1">Bifunctional protein GlmU</fullName>
    </recommendedName>
    <domain>
        <recommendedName>
            <fullName evidence="1">UDP-N-acetylglucosamine pyrophosphorylase</fullName>
            <ecNumber evidence="1">2.7.7.23</ecNumber>
        </recommendedName>
        <alternativeName>
            <fullName evidence="1">N-acetylglucosamine-1-phosphate uridyltransferase</fullName>
        </alternativeName>
    </domain>
    <domain>
        <recommendedName>
            <fullName evidence="1">Glucosamine-1-phosphate N-acetyltransferase</fullName>
            <ecNumber evidence="1">2.3.1.157</ecNumber>
        </recommendedName>
    </domain>
</protein>
<name>GLMU_CLOAB</name>
<accession>Q97E92</accession>
<sequence length="456" mass="49692">MYKCALILAAGKGKRMKSDLPKVLHKVCDKEMVNHVIDTMRKSELQDVNVVIGKGAELVREATSKKNISYSLQSEQLGTGHAVKCAEDFLRGKDGVVAIFTGDAPLITEDTVKNLIDFHEKGGYKATIITALIDNPEGYGRIIRNVDGSVKKIVEHKDCTEDELKVKEINSAMYCFDIKSLLESLDKLNNNNVQGEYYLTDVIGILEEEGAKIGAISVPFEEILGVNSRLQLCQVGKVMQKRINEKHMENGSTLIDPDNTYIGADVEIESDTIIYPGNVLQGKTVIKTGCVLYPNSRIEDSVIGKNVTVQSSVILESKVGEDTTVGPFAYIRPESNIGNKVRIGDFVEIKKSTIGNNTKVSHLTYIGDAEVGEGCNFGCGTVVVNYDGKDKHKTVIGNKSFIGCNTNLVSPVTVEDNTYIAAGSTITNKVPEGSLAIARAKQVVKEGWVDKKGLLK</sequence>
<organism>
    <name type="scientific">Clostridium acetobutylicum (strain ATCC 824 / DSM 792 / JCM 1419 / IAM 19013 / LMG 5710 / NBRC 13948 / NRRL B-527 / VKM B-1787 / 2291 / W)</name>
    <dbReference type="NCBI Taxonomy" id="272562"/>
    <lineage>
        <taxon>Bacteria</taxon>
        <taxon>Bacillati</taxon>
        <taxon>Bacillota</taxon>
        <taxon>Clostridia</taxon>
        <taxon>Eubacteriales</taxon>
        <taxon>Clostridiaceae</taxon>
        <taxon>Clostridium</taxon>
    </lineage>
</organism>
<gene>
    <name evidence="1" type="primary">glmU</name>
    <name type="ordered locus">CA_C3222</name>
</gene>
<comment type="function">
    <text evidence="1">Catalyzes the last two sequential reactions in the de novo biosynthetic pathway for UDP-N-acetylglucosamine (UDP-GlcNAc). The C-terminal domain catalyzes the transfer of acetyl group from acetyl coenzyme A to glucosamine-1-phosphate (GlcN-1-P) to produce N-acetylglucosamine-1-phosphate (GlcNAc-1-P), which is converted into UDP-GlcNAc by the transfer of uridine 5-monophosphate (from uridine 5-triphosphate), a reaction catalyzed by the N-terminal domain.</text>
</comment>
<comment type="catalytic activity">
    <reaction evidence="1">
        <text>alpha-D-glucosamine 1-phosphate + acetyl-CoA = N-acetyl-alpha-D-glucosamine 1-phosphate + CoA + H(+)</text>
        <dbReference type="Rhea" id="RHEA:13725"/>
        <dbReference type="ChEBI" id="CHEBI:15378"/>
        <dbReference type="ChEBI" id="CHEBI:57287"/>
        <dbReference type="ChEBI" id="CHEBI:57288"/>
        <dbReference type="ChEBI" id="CHEBI:57776"/>
        <dbReference type="ChEBI" id="CHEBI:58516"/>
        <dbReference type="EC" id="2.3.1.157"/>
    </reaction>
</comment>
<comment type="catalytic activity">
    <reaction evidence="1">
        <text>N-acetyl-alpha-D-glucosamine 1-phosphate + UTP + H(+) = UDP-N-acetyl-alpha-D-glucosamine + diphosphate</text>
        <dbReference type="Rhea" id="RHEA:13509"/>
        <dbReference type="ChEBI" id="CHEBI:15378"/>
        <dbReference type="ChEBI" id="CHEBI:33019"/>
        <dbReference type="ChEBI" id="CHEBI:46398"/>
        <dbReference type="ChEBI" id="CHEBI:57705"/>
        <dbReference type="ChEBI" id="CHEBI:57776"/>
        <dbReference type="EC" id="2.7.7.23"/>
    </reaction>
</comment>
<comment type="cofactor">
    <cofactor evidence="1">
        <name>Mg(2+)</name>
        <dbReference type="ChEBI" id="CHEBI:18420"/>
    </cofactor>
    <text evidence="1">Binds 1 Mg(2+) ion per subunit.</text>
</comment>
<comment type="pathway">
    <text evidence="1">Nucleotide-sugar biosynthesis; UDP-N-acetyl-alpha-D-glucosamine biosynthesis; N-acetyl-alpha-D-glucosamine 1-phosphate from alpha-D-glucosamine 6-phosphate (route II): step 2/2.</text>
</comment>
<comment type="pathway">
    <text evidence="1">Nucleotide-sugar biosynthesis; UDP-N-acetyl-alpha-D-glucosamine biosynthesis; UDP-N-acetyl-alpha-D-glucosamine from N-acetyl-alpha-D-glucosamine 1-phosphate: step 1/1.</text>
</comment>
<comment type="pathway">
    <text evidence="1">Bacterial outer membrane biogenesis; LPS lipid A biosynthesis.</text>
</comment>
<comment type="subunit">
    <text evidence="1">Homotrimer.</text>
</comment>
<comment type="subcellular location">
    <subcellularLocation>
        <location evidence="1">Cytoplasm</location>
    </subcellularLocation>
</comment>
<comment type="similarity">
    <text evidence="1">In the N-terminal section; belongs to the N-acetylglucosamine-1-phosphate uridyltransferase family.</text>
</comment>
<comment type="similarity">
    <text evidence="1">In the C-terminal section; belongs to the transferase hexapeptide repeat family.</text>
</comment>
<dbReference type="EC" id="2.7.7.23" evidence="1"/>
<dbReference type="EC" id="2.3.1.157" evidence="1"/>
<dbReference type="EMBL" id="AE001437">
    <property type="protein sequence ID" value="AAK81158.1"/>
    <property type="molecule type" value="Genomic_DNA"/>
</dbReference>
<dbReference type="PIR" id="C97296">
    <property type="entry name" value="C97296"/>
</dbReference>
<dbReference type="RefSeq" id="NP_349818.1">
    <property type="nucleotide sequence ID" value="NC_003030.1"/>
</dbReference>
<dbReference type="RefSeq" id="WP_010966498.1">
    <property type="nucleotide sequence ID" value="NC_003030.1"/>
</dbReference>
<dbReference type="SMR" id="Q97E92"/>
<dbReference type="STRING" id="272562.CA_C3222"/>
<dbReference type="GeneID" id="44999718"/>
<dbReference type="KEGG" id="cac:CA_C3222"/>
<dbReference type="PATRIC" id="fig|272562.8.peg.3401"/>
<dbReference type="eggNOG" id="COG1207">
    <property type="taxonomic scope" value="Bacteria"/>
</dbReference>
<dbReference type="HOGENOM" id="CLU_029499_15_2_9"/>
<dbReference type="OrthoDB" id="9775031at2"/>
<dbReference type="UniPathway" id="UPA00113">
    <property type="reaction ID" value="UER00532"/>
</dbReference>
<dbReference type="UniPathway" id="UPA00113">
    <property type="reaction ID" value="UER00533"/>
</dbReference>
<dbReference type="UniPathway" id="UPA00973"/>
<dbReference type="Proteomes" id="UP000000814">
    <property type="component" value="Chromosome"/>
</dbReference>
<dbReference type="GO" id="GO:0005737">
    <property type="term" value="C:cytoplasm"/>
    <property type="evidence" value="ECO:0007669"/>
    <property type="project" value="UniProtKB-SubCell"/>
</dbReference>
<dbReference type="GO" id="GO:0016020">
    <property type="term" value="C:membrane"/>
    <property type="evidence" value="ECO:0007669"/>
    <property type="project" value="GOC"/>
</dbReference>
<dbReference type="GO" id="GO:0019134">
    <property type="term" value="F:glucosamine-1-phosphate N-acetyltransferase activity"/>
    <property type="evidence" value="ECO:0007669"/>
    <property type="project" value="UniProtKB-UniRule"/>
</dbReference>
<dbReference type="GO" id="GO:0000287">
    <property type="term" value="F:magnesium ion binding"/>
    <property type="evidence" value="ECO:0007669"/>
    <property type="project" value="UniProtKB-UniRule"/>
</dbReference>
<dbReference type="GO" id="GO:0003977">
    <property type="term" value="F:UDP-N-acetylglucosamine diphosphorylase activity"/>
    <property type="evidence" value="ECO:0007669"/>
    <property type="project" value="UniProtKB-UniRule"/>
</dbReference>
<dbReference type="GO" id="GO:0000902">
    <property type="term" value="P:cell morphogenesis"/>
    <property type="evidence" value="ECO:0007669"/>
    <property type="project" value="UniProtKB-UniRule"/>
</dbReference>
<dbReference type="GO" id="GO:0071555">
    <property type="term" value="P:cell wall organization"/>
    <property type="evidence" value="ECO:0007669"/>
    <property type="project" value="UniProtKB-KW"/>
</dbReference>
<dbReference type="GO" id="GO:0009245">
    <property type="term" value="P:lipid A biosynthetic process"/>
    <property type="evidence" value="ECO:0007669"/>
    <property type="project" value="UniProtKB-UniRule"/>
</dbReference>
<dbReference type="GO" id="GO:0009252">
    <property type="term" value="P:peptidoglycan biosynthetic process"/>
    <property type="evidence" value="ECO:0007669"/>
    <property type="project" value="UniProtKB-UniRule"/>
</dbReference>
<dbReference type="GO" id="GO:0008360">
    <property type="term" value="P:regulation of cell shape"/>
    <property type="evidence" value="ECO:0007669"/>
    <property type="project" value="UniProtKB-KW"/>
</dbReference>
<dbReference type="GO" id="GO:0006048">
    <property type="term" value="P:UDP-N-acetylglucosamine biosynthetic process"/>
    <property type="evidence" value="ECO:0007669"/>
    <property type="project" value="UniProtKB-UniPathway"/>
</dbReference>
<dbReference type="CDD" id="cd02540">
    <property type="entry name" value="GT2_GlmU_N_bac"/>
    <property type="match status" value="1"/>
</dbReference>
<dbReference type="CDD" id="cd03353">
    <property type="entry name" value="LbH_GlmU_C"/>
    <property type="match status" value="1"/>
</dbReference>
<dbReference type="Gene3D" id="2.160.10.10">
    <property type="entry name" value="Hexapeptide repeat proteins"/>
    <property type="match status" value="1"/>
</dbReference>
<dbReference type="Gene3D" id="3.90.550.10">
    <property type="entry name" value="Spore Coat Polysaccharide Biosynthesis Protein SpsA, Chain A"/>
    <property type="match status" value="1"/>
</dbReference>
<dbReference type="HAMAP" id="MF_01631">
    <property type="entry name" value="GlmU"/>
    <property type="match status" value="1"/>
</dbReference>
<dbReference type="InterPro" id="IPR005882">
    <property type="entry name" value="Bifunctional_GlmU"/>
</dbReference>
<dbReference type="InterPro" id="IPR050065">
    <property type="entry name" value="GlmU-like"/>
</dbReference>
<dbReference type="InterPro" id="IPR038009">
    <property type="entry name" value="GlmU_C_LbH"/>
</dbReference>
<dbReference type="InterPro" id="IPR001451">
    <property type="entry name" value="Hexapep"/>
</dbReference>
<dbReference type="InterPro" id="IPR018357">
    <property type="entry name" value="Hexapep_transf_CS"/>
</dbReference>
<dbReference type="InterPro" id="IPR005835">
    <property type="entry name" value="NTP_transferase_dom"/>
</dbReference>
<dbReference type="InterPro" id="IPR029044">
    <property type="entry name" value="Nucleotide-diphossugar_trans"/>
</dbReference>
<dbReference type="InterPro" id="IPR011004">
    <property type="entry name" value="Trimer_LpxA-like_sf"/>
</dbReference>
<dbReference type="NCBIfam" id="TIGR01173">
    <property type="entry name" value="glmU"/>
    <property type="match status" value="1"/>
</dbReference>
<dbReference type="NCBIfam" id="NF010934">
    <property type="entry name" value="PRK14354.1"/>
    <property type="match status" value="1"/>
</dbReference>
<dbReference type="PANTHER" id="PTHR43584:SF3">
    <property type="entry name" value="BIFUNCTIONAL PROTEIN GLMU"/>
    <property type="match status" value="1"/>
</dbReference>
<dbReference type="PANTHER" id="PTHR43584">
    <property type="entry name" value="NUCLEOTIDYL TRANSFERASE"/>
    <property type="match status" value="1"/>
</dbReference>
<dbReference type="Pfam" id="PF00132">
    <property type="entry name" value="Hexapep"/>
    <property type="match status" value="2"/>
</dbReference>
<dbReference type="Pfam" id="PF00483">
    <property type="entry name" value="NTP_transferase"/>
    <property type="match status" value="1"/>
</dbReference>
<dbReference type="SUPFAM" id="SSF53448">
    <property type="entry name" value="Nucleotide-diphospho-sugar transferases"/>
    <property type="match status" value="1"/>
</dbReference>
<dbReference type="SUPFAM" id="SSF51161">
    <property type="entry name" value="Trimeric LpxA-like enzymes"/>
    <property type="match status" value="1"/>
</dbReference>
<dbReference type="PROSITE" id="PS00101">
    <property type="entry name" value="HEXAPEP_TRANSFERASES"/>
    <property type="match status" value="1"/>
</dbReference>